<gene>
    <name evidence="1" type="primary">rpsT</name>
    <name type="ordered locus">CbuG_1618</name>
</gene>
<reference key="1">
    <citation type="journal article" date="2009" name="Infect. Immun.">
        <title>Comparative genomics reveal extensive transposon-mediated genomic plasticity and diversity among potential effector proteins within the genus Coxiella.</title>
        <authorList>
            <person name="Beare P.A."/>
            <person name="Unsworth N."/>
            <person name="Andoh M."/>
            <person name="Voth D.E."/>
            <person name="Omsland A."/>
            <person name="Gilk S.D."/>
            <person name="Williams K.P."/>
            <person name="Sobral B.W."/>
            <person name="Kupko J.J. III"/>
            <person name="Porcella S.F."/>
            <person name="Samuel J.E."/>
            <person name="Heinzen R.A."/>
        </authorList>
    </citation>
    <scope>NUCLEOTIDE SEQUENCE [LARGE SCALE GENOMIC DNA]</scope>
    <source>
        <strain>CbuG_Q212</strain>
    </source>
</reference>
<evidence type="ECO:0000255" key="1">
    <source>
        <dbReference type="HAMAP-Rule" id="MF_00500"/>
    </source>
</evidence>
<evidence type="ECO:0000256" key="2">
    <source>
        <dbReference type="SAM" id="MobiDB-lite"/>
    </source>
</evidence>
<evidence type="ECO:0000305" key="3"/>
<keyword id="KW-0687">Ribonucleoprotein</keyword>
<keyword id="KW-0689">Ribosomal protein</keyword>
<keyword id="KW-0694">RNA-binding</keyword>
<keyword id="KW-0699">rRNA-binding</keyword>
<name>RS20_COXB2</name>
<accession>B6J1S7</accession>
<dbReference type="EMBL" id="CP001019">
    <property type="protein sequence ID" value="ACJ18905.1"/>
    <property type="molecule type" value="Genomic_DNA"/>
</dbReference>
<dbReference type="RefSeq" id="WP_005771970.1">
    <property type="nucleotide sequence ID" value="NC_011527.1"/>
</dbReference>
<dbReference type="SMR" id="B6J1S7"/>
<dbReference type="KEGG" id="cbg:CbuG_1618"/>
<dbReference type="HOGENOM" id="CLU_160655_4_0_6"/>
<dbReference type="GO" id="GO:0005829">
    <property type="term" value="C:cytosol"/>
    <property type="evidence" value="ECO:0007669"/>
    <property type="project" value="TreeGrafter"/>
</dbReference>
<dbReference type="GO" id="GO:0015935">
    <property type="term" value="C:small ribosomal subunit"/>
    <property type="evidence" value="ECO:0007669"/>
    <property type="project" value="TreeGrafter"/>
</dbReference>
<dbReference type="GO" id="GO:0070181">
    <property type="term" value="F:small ribosomal subunit rRNA binding"/>
    <property type="evidence" value="ECO:0007669"/>
    <property type="project" value="TreeGrafter"/>
</dbReference>
<dbReference type="GO" id="GO:0003735">
    <property type="term" value="F:structural constituent of ribosome"/>
    <property type="evidence" value="ECO:0007669"/>
    <property type="project" value="InterPro"/>
</dbReference>
<dbReference type="GO" id="GO:0006412">
    <property type="term" value="P:translation"/>
    <property type="evidence" value="ECO:0007669"/>
    <property type="project" value="UniProtKB-UniRule"/>
</dbReference>
<dbReference type="FunFam" id="1.20.58.110:FF:000001">
    <property type="entry name" value="30S ribosomal protein S20"/>
    <property type="match status" value="1"/>
</dbReference>
<dbReference type="Gene3D" id="1.20.58.110">
    <property type="entry name" value="Ribosomal protein S20"/>
    <property type="match status" value="1"/>
</dbReference>
<dbReference type="HAMAP" id="MF_00500">
    <property type="entry name" value="Ribosomal_bS20"/>
    <property type="match status" value="1"/>
</dbReference>
<dbReference type="InterPro" id="IPR002583">
    <property type="entry name" value="Ribosomal_bS20"/>
</dbReference>
<dbReference type="InterPro" id="IPR036510">
    <property type="entry name" value="Ribosomal_bS20_sf"/>
</dbReference>
<dbReference type="NCBIfam" id="TIGR00029">
    <property type="entry name" value="S20"/>
    <property type="match status" value="1"/>
</dbReference>
<dbReference type="PANTHER" id="PTHR33398">
    <property type="entry name" value="30S RIBOSOMAL PROTEIN S20"/>
    <property type="match status" value="1"/>
</dbReference>
<dbReference type="PANTHER" id="PTHR33398:SF1">
    <property type="entry name" value="SMALL RIBOSOMAL SUBUNIT PROTEIN BS20C"/>
    <property type="match status" value="1"/>
</dbReference>
<dbReference type="Pfam" id="PF01649">
    <property type="entry name" value="Ribosomal_S20p"/>
    <property type="match status" value="1"/>
</dbReference>
<dbReference type="SUPFAM" id="SSF46992">
    <property type="entry name" value="Ribosomal protein S20"/>
    <property type="match status" value="1"/>
</dbReference>
<protein>
    <recommendedName>
        <fullName evidence="1">Small ribosomal subunit protein bS20</fullName>
    </recommendedName>
    <alternativeName>
        <fullName evidence="3">30S ribosomal protein S20</fullName>
    </alternativeName>
</protein>
<feature type="chain" id="PRO_1000126429" description="Small ribosomal subunit protein bS20">
    <location>
        <begin position="1"/>
        <end position="90"/>
    </location>
</feature>
<feature type="region of interest" description="Disordered" evidence="2">
    <location>
        <begin position="1"/>
        <end position="27"/>
    </location>
</feature>
<comment type="function">
    <text evidence="1">Binds directly to 16S ribosomal RNA.</text>
</comment>
<comment type="similarity">
    <text evidence="1">Belongs to the bacterial ribosomal protein bS20 family.</text>
</comment>
<proteinExistence type="inferred from homology"/>
<sequence>MANSAQAKKRARQNEKRELHNASQRSAVRTAVKKILKSLQANDSSAAQSAYQHAVQILDKAAGRRIIHPNKAARLKSRLSQKIKNLSSSQ</sequence>
<organism>
    <name type="scientific">Coxiella burnetii (strain CbuG_Q212)</name>
    <name type="common">Coxiella burnetii (strain Q212)</name>
    <dbReference type="NCBI Taxonomy" id="434923"/>
    <lineage>
        <taxon>Bacteria</taxon>
        <taxon>Pseudomonadati</taxon>
        <taxon>Pseudomonadota</taxon>
        <taxon>Gammaproteobacteria</taxon>
        <taxon>Legionellales</taxon>
        <taxon>Coxiellaceae</taxon>
        <taxon>Coxiella</taxon>
    </lineage>
</organism>